<gene>
    <name evidence="1" type="primary">mtnA</name>
    <name type="ordered locus">Tpet_0016</name>
</gene>
<protein>
    <recommendedName>
        <fullName evidence="1">Methylthioribose-1-phosphate isomerase</fullName>
        <shortName evidence="1">M1Pi</shortName>
        <shortName evidence="1">MTR-1-P isomerase</shortName>
        <ecNumber evidence="1">5.3.1.23</ecNumber>
    </recommendedName>
    <alternativeName>
        <fullName evidence="1">S-methyl-5-thioribose-1-phosphate isomerase</fullName>
    </alternativeName>
</protein>
<feature type="chain" id="PRO_0000357262" description="Methylthioribose-1-phosphate isomerase">
    <location>
        <begin position="1"/>
        <end position="343"/>
    </location>
</feature>
<feature type="active site" description="Proton donor" evidence="1">
    <location>
        <position position="234"/>
    </location>
</feature>
<feature type="binding site" evidence="1">
    <location>
        <begin position="48"/>
        <end position="50"/>
    </location>
    <ligand>
        <name>substrate</name>
    </ligand>
</feature>
<feature type="binding site" evidence="1">
    <location>
        <position position="88"/>
    </location>
    <ligand>
        <name>substrate</name>
    </ligand>
</feature>
<feature type="binding site" evidence="1">
    <location>
        <position position="193"/>
    </location>
    <ligand>
        <name>substrate</name>
    </ligand>
</feature>
<feature type="binding site" evidence="1">
    <location>
        <begin position="244"/>
        <end position="245"/>
    </location>
    <ligand>
        <name>substrate</name>
    </ligand>
</feature>
<feature type="site" description="Transition state stabilizer" evidence="1">
    <location>
        <position position="154"/>
    </location>
</feature>
<sequence>MKLKTKTMEWSGDSLKLLDQRKLPFIEEYVECKTHEEVAHAIKEMIVRGAPAIGVTAAFGYVLGLRDYKTGSLTDWMKQVKETLARTRPTAVNLFWALNRMEKVFFENVDRENLFEILENEALKMAYEDIEVNKAIGKNGAQLIKDGSTILTHCNAGALATVDYGTALGVIRAAMESGKRIRVFADETRPYLQGARLTAWELMKDGIEVYVITDNMAGWLMKKGLIDAVVVGADRIALNGDTANKIGTYSLAVLAKRNNIPFYVAAPVSTIDPTIKSGEEIPIEERRPEEVTHCGGNRIAPEGVKVLNPAFDVTENTLITAIITEKGVIRPPFEENIKKILGV</sequence>
<name>MTNA_THEP1</name>
<dbReference type="EC" id="5.3.1.23" evidence="1"/>
<dbReference type="EMBL" id="CP000702">
    <property type="protein sequence ID" value="ABQ46045.1"/>
    <property type="molecule type" value="Genomic_DNA"/>
</dbReference>
<dbReference type="RefSeq" id="WP_011942723.1">
    <property type="nucleotide sequence ID" value="NC_009486.1"/>
</dbReference>
<dbReference type="SMR" id="A5IIM2"/>
<dbReference type="STRING" id="390874.Tpet_0016"/>
<dbReference type="KEGG" id="tpt:Tpet_0016"/>
<dbReference type="eggNOG" id="COG0182">
    <property type="taxonomic scope" value="Bacteria"/>
</dbReference>
<dbReference type="HOGENOM" id="CLU_016218_1_2_0"/>
<dbReference type="UniPathway" id="UPA00904">
    <property type="reaction ID" value="UER00874"/>
</dbReference>
<dbReference type="Proteomes" id="UP000006558">
    <property type="component" value="Chromosome"/>
</dbReference>
<dbReference type="GO" id="GO:0046523">
    <property type="term" value="F:S-methyl-5-thioribose-1-phosphate isomerase activity"/>
    <property type="evidence" value="ECO:0007669"/>
    <property type="project" value="UniProtKB-UniRule"/>
</dbReference>
<dbReference type="GO" id="GO:0019509">
    <property type="term" value="P:L-methionine salvage from methylthioadenosine"/>
    <property type="evidence" value="ECO:0007669"/>
    <property type="project" value="UniProtKB-UniRule"/>
</dbReference>
<dbReference type="FunFam" id="1.20.120.420:FF:000003">
    <property type="entry name" value="Methylthioribose-1-phosphate isomerase"/>
    <property type="match status" value="1"/>
</dbReference>
<dbReference type="FunFam" id="3.40.50.10470:FF:000010">
    <property type="entry name" value="Methylthioribose-1-phosphate isomerase"/>
    <property type="match status" value="1"/>
</dbReference>
<dbReference type="Gene3D" id="1.20.120.420">
    <property type="entry name" value="translation initiation factor eif-2b, domain 1"/>
    <property type="match status" value="1"/>
</dbReference>
<dbReference type="Gene3D" id="3.40.50.10470">
    <property type="entry name" value="Translation initiation factor eif-2b, domain 2"/>
    <property type="match status" value="1"/>
</dbReference>
<dbReference type="HAMAP" id="MF_01678">
    <property type="entry name" value="Salvage_MtnA"/>
    <property type="match status" value="1"/>
</dbReference>
<dbReference type="InterPro" id="IPR000649">
    <property type="entry name" value="IF-2B-related"/>
</dbReference>
<dbReference type="InterPro" id="IPR005251">
    <property type="entry name" value="IF-M1Pi"/>
</dbReference>
<dbReference type="InterPro" id="IPR042529">
    <property type="entry name" value="IF_2B-like_C"/>
</dbReference>
<dbReference type="InterPro" id="IPR011559">
    <property type="entry name" value="Initiation_fac_2B_a/b/d"/>
</dbReference>
<dbReference type="InterPro" id="IPR027363">
    <property type="entry name" value="M1Pi_N"/>
</dbReference>
<dbReference type="InterPro" id="IPR037171">
    <property type="entry name" value="NagB/RpiA_transferase-like"/>
</dbReference>
<dbReference type="NCBIfam" id="TIGR00524">
    <property type="entry name" value="eIF-2B_rel"/>
    <property type="match status" value="1"/>
</dbReference>
<dbReference type="NCBIfam" id="NF004326">
    <property type="entry name" value="PRK05720.1"/>
    <property type="match status" value="1"/>
</dbReference>
<dbReference type="NCBIfam" id="TIGR00512">
    <property type="entry name" value="salvage_mtnA"/>
    <property type="match status" value="1"/>
</dbReference>
<dbReference type="PANTHER" id="PTHR43475">
    <property type="entry name" value="METHYLTHIORIBOSE-1-PHOSPHATE ISOMERASE"/>
    <property type="match status" value="1"/>
</dbReference>
<dbReference type="PANTHER" id="PTHR43475:SF1">
    <property type="entry name" value="METHYLTHIORIBOSE-1-PHOSPHATE ISOMERASE"/>
    <property type="match status" value="1"/>
</dbReference>
<dbReference type="Pfam" id="PF01008">
    <property type="entry name" value="IF-2B"/>
    <property type="match status" value="1"/>
</dbReference>
<dbReference type="SUPFAM" id="SSF100950">
    <property type="entry name" value="NagB/RpiA/CoA transferase-like"/>
    <property type="match status" value="1"/>
</dbReference>
<organism>
    <name type="scientific">Thermotoga petrophila (strain ATCC BAA-488 / DSM 13995 / JCM 10881 / RKU-1)</name>
    <dbReference type="NCBI Taxonomy" id="390874"/>
    <lineage>
        <taxon>Bacteria</taxon>
        <taxon>Thermotogati</taxon>
        <taxon>Thermotogota</taxon>
        <taxon>Thermotogae</taxon>
        <taxon>Thermotogales</taxon>
        <taxon>Thermotogaceae</taxon>
        <taxon>Thermotoga</taxon>
    </lineage>
</organism>
<proteinExistence type="inferred from homology"/>
<comment type="function">
    <text evidence="1">Catalyzes the interconversion of methylthioribose-1-phosphate (MTR-1-P) into methylthioribulose-1-phosphate (MTRu-1-P).</text>
</comment>
<comment type="catalytic activity">
    <reaction evidence="1">
        <text>5-(methylsulfanyl)-alpha-D-ribose 1-phosphate = 5-(methylsulfanyl)-D-ribulose 1-phosphate</text>
        <dbReference type="Rhea" id="RHEA:19989"/>
        <dbReference type="ChEBI" id="CHEBI:58533"/>
        <dbReference type="ChEBI" id="CHEBI:58548"/>
        <dbReference type="EC" id="5.3.1.23"/>
    </reaction>
</comment>
<comment type="pathway">
    <text evidence="1">Amino-acid biosynthesis; L-methionine biosynthesis via salvage pathway; L-methionine from S-methyl-5-thio-alpha-D-ribose 1-phosphate: step 1/6.</text>
</comment>
<comment type="similarity">
    <text evidence="2">Belongs to the eIF-2B alpha/beta/delta subunits family. MtnA subfamily.</text>
</comment>
<evidence type="ECO:0000255" key="1">
    <source>
        <dbReference type="HAMAP-Rule" id="MF_01678"/>
    </source>
</evidence>
<evidence type="ECO:0000305" key="2"/>
<reference key="1">
    <citation type="submission" date="2007-05" db="EMBL/GenBank/DDBJ databases">
        <title>Complete sequence of Thermotoga petrophila RKU-1.</title>
        <authorList>
            <consortium name="US DOE Joint Genome Institute"/>
            <person name="Copeland A."/>
            <person name="Lucas S."/>
            <person name="Lapidus A."/>
            <person name="Barry K."/>
            <person name="Glavina del Rio T."/>
            <person name="Dalin E."/>
            <person name="Tice H."/>
            <person name="Pitluck S."/>
            <person name="Sims D."/>
            <person name="Brettin T."/>
            <person name="Bruce D."/>
            <person name="Detter J.C."/>
            <person name="Han C."/>
            <person name="Tapia R."/>
            <person name="Schmutz J."/>
            <person name="Larimer F."/>
            <person name="Land M."/>
            <person name="Hauser L."/>
            <person name="Kyrpides N."/>
            <person name="Mikhailova N."/>
            <person name="Nelson K."/>
            <person name="Gogarten J.P."/>
            <person name="Noll K."/>
            <person name="Richardson P."/>
        </authorList>
    </citation>
    <scope>NUCLEOTIDE SEQUENCE [LARGE SCALE GENOMIC DNA]</scope>
    <source>
        <strain>ATCC BAA-488 / DSM 13995 / JCM 10881 / RKU-1</strain>
    </source>
</reference>
<keyword id="KW-0028">Amino-acid biosynthesis</keyword>
<keyword id="KW-0413">Isomerase</keyword>
<keyword id="KW-0486">Methionine biosynthesis</keyword>
<accession>A5IIM2</accession>